<gene>
    <name evidence="5" type="primary">ALT3</name>
    <name evidence="7" type="ordered locus">At1g68260</name>
    <name evidence="8" type="ORF">T22E19.11</name>
</gene>
<keyword id="KW-0150">Chloroplast</keyword>
<keyword id="KW-0378">Hydrolase</keyword>
<keyword id="KW-0443">Lipid metabolism</keyword>
<keyword id="KW-0934">Plastid</keyword>
<keyword id="KW-1185">Reference proteome</keyword>
<keyword id="KW-0809">Transit peptide</keyword>
<sequence>MFLQVTGTATPAMPAVVFLNSWRRPLSIPLRSVKTFKPLAFFDLKGGKGMSEFHEVELKVRDYELDQFGVVNNAVYANYCQHGRHEFLESIGINCDEVARSGEALAISELTMKFLSPLRSGDKFVVKARISGTSAARIYFDHFIFKLPNQEPILEAKGIAVWLDNKYRPVRIPSSIRSKFVHFLRQDDAV</sequence>
<evidence type="ECO:0000250" key="1">
    <source>
        <dbReference type="UniProtKB" id="P56653"/>
    </source>
</evidence>
<evidence type="ECO:0000250" key="2">
    <source>
        <dbReference type="UniProtKB" id="Q9C7I5"/>
    </source>
</evidence>
<evidence type="ECO:0000255" key="3"/>
<evidence type="ECO:0000269" key="4">
    <source>
    </source>
</evidence>
<evidence type="ECO:0000303" key="5">
    <source>
    </source>
</evidence>
<evidence type="ECO:0000305" key="6"/>
<evidence type="ECO:0000312" key="7">
    <source>
        <dbReference type="Araport" id="AT1G68260"/>
    </source>
</evidence>
<evidence type="ECO:0000312" key="8">
    <source>
        <dbReference type="EMBL" id="AAG52599.1"/>
    </source>
</evidence>
<feature type="transit peptide" description="Chloroplast" evidence="3">
    <location>
        <begin position="1"/>
        <end position="49"/>
    </location>
</feature>
<feature type="chain" id="PRO_0000435263" description="Acyl-acyl carrier protein thioesterase ATL3, chloroplastic">
    <location>
        <begin position="50"/>
        <end position="190"/>
    </location>
</feature>
<feature type="active site" evidence="1 2">
    <location>
        <position position="66"/>
    </location>
</feature>
<name>ALT3_ARATH</name>
<organism>
    <name type="scientific">Arabidopsis thaliana</name>
    <name type="common">Mouse-ear cress</name>
    <dbReference type="NCBI Taxonomy" id="3702"/>
    <lineage>
        <taxon>Eukaryota</taxon>
        <taxon>Viridiplantae</taxon>
        <taxon>Streptophyta</taxon>
        <taxon>Embryophyta</taxon>
        <taxon>Tracheophyta</taxon>
        <taxon>Spermatophyta</taxon>
        <taxon>Magnoliopsida</taxon>
        <taxon>eudicotyledons</taxon>
        <taxon>Gunneridae</taxon>
        <taxon>Pentapetalae</taxon>
        <taxon>rosids</taxon>
        <taxon>malvids</taxon>
        <taxon>Brassicales</taxon>
        <taxon>Brassicaceae</taxon>
        <taxon>Camelineae</taxon>
        <taxon>Arabidopsis</taxon>
    </lineage>
</organism>
<protein>
    <recommendedName>
        <fullName evidence="6">Acyl-acyl carrier protein thioesterase ATL3, chloroplastic</fullName>
        <ecNumber evidence="6">3.1.2.-</ecNumber>
    </recommendedName>
    <alternativeName>
        <fullName evidence="6">Acyl-ACP thioesterase ATL3</fullName>
    </alternativeName>
    <alternativeName>
        <fullName evidence="5">Acyl-lipid thioesterase 3</fullName>
    </alternativeName>
</protein>
<dbReference type="EC" id="3.1.2.-" evidence="6"/>
<dbReference type="EMBL" id="AC016447">
    <property type="protein sequence ID" value="AAG52599.1"/>
    <property type="status" value="ALT_INIT"/>
    <property type="molecule type" value="Genomic_DNA"/>
</dbReference>
<dbReference type="EMBL" id="CP002684">
    <property type="protein sequence ID" value="AEE34774.1"/>
    <property type="molecule type" value="Genomic_DNA"/>
</dbReference>
<dbReference type="EMBL" id="AF419571">
    <property type="protein sequence ID" value="AAL31903.1"/>
    <property type="molecule type" value="mRNA"/>
</dbReference>
<dbReference type="EMBL" id="AY143819">
    <property type="protein sequence ID" value="AAN28758.1"/>
    <property type="molecule type" value="mRNA"/>
</dbReference>
<dbReference type="EMBL" id="AY085771">
    <property type="protein sequence ID" value="AAM62988.1"/>
    <property type="molecule type" value="mRNA"/>
</dbReference>
<dbReference type="PIR" id="B96706">
    <property type="entry name" value="B96706"/>
</dbReference>
<dbReference type="RefSeq" id="NP_564926.1">
    <property type="nucleotide sequence ID" value="NM_105497.5"/>
</dbReference>
<dbReference type="SMR" id="Q8W583"/>
<dbReference type="FunCoup" id="Q8W583">
    <property type="interactions" value="24"/>
</dbReference>
<dbReference type="STRING" id="3702.Q8W583"/>
<dbReference type="PaxDb" id="3702-AT1G68260.1"/>
<dbReference type="ProteomicsDB" id="244459"/>
<dbReference type="EnsemblPlants" id="AT1G68260.1">
    <property type="protein sequence ID" value="AT1G68260.1"/>
    <property type="gene ID" value="AT1G68260"/>
</dbReference>
<dbReference type="GeneID" id="843155"/>
<dbReference type="Gramene" id="AT1G68260.1">
    <property type="protein sequence ID" value="AT1G68260.1"/>
    <property type="gene ID" value="AT1G68260"/>
</dbReference>
<dbReference type="KEGG" id="ath:AT1G68260"/>
<dbReference type="Araport" id="AT1G68260"/>
<dbReference type="TAIR" id="AT1G68260">
    <property type="gene designation" value="ALT3"/>
</dbReference>
<dbReference type="eggNOG" id="ENOG502RYRP">
    <property type="taxonomic scope" value="Eukaryota"/>
</dbReference>
<dbReference type="HOGENOM" id="CLU_101141_1_2_1"/>
<dbReference type="InParanoid" id="Q8W583"/>
<dbReference type="OMA" id="GMSGFHD"/>
<dbReference type="OrthoDB" id="588330at2759"/>
<dbReference type="PhylomeDB" id="Q8W583"/>
<dbReference type="BioCyc" id="ARA:AT1G68260-MONOMER"/>
<dbReference type="BRENDA" id="3.1.2.14">
    <property type="organism ID" value="399"/>
</dbReference>
<dbReference type="PRO" id="PR:Q8W583"/>
<dbReference type="Proteomes" id="UP000006548">
    <property type="component" value="Chromosome 1"/>
</dbReference>
<dbReference type="ExpressionAtlas" id="Q8W583">
    <property type="expression patterns" value="baseline and differential"/>
</dbReference>
<dbReference type="GO" id="GO:0009507">
    <property type="term" value="C:chloroplast"/>
    <property type="evidence" value="ECO:0000314"/>
    <property type="project" value="UniProtKB"/>
</dbReference>
<dbReference type="GO" id="GO:0005739">
    <property type="term" value="C:mitochondrion"/>
    <property type="evidence" value="ECO:0007005"/>
    <property type="project" value="TAIR"/>
</dbReference>
<dbReference type="GO" id="GO:0016297">
    <property type="term" value="F:fatty acyl-[ACP] hydrolase activity"/>
    <property type="evidence" value="ECO:0000314"/>
    <property type="project" value="UniProtKB"/>
</dbReference>
<dbReference type="GO" id="GO:0006629">
    <property type="term" value="P:lipid metabolic process"/>
    <property type="evidence" value="ECO:0007669"/>
    <property type="project" value="UniProtKB-KW"/>
</dbReference>
<dbReference type="CDD" id="cd00586">
    <property type="entry name" value="4HBT"/>
    <property type="match status" value="1"/>
</dbReference>
<dbReference type="FunFam" id="3.10.129.10:FF:000037">
    <property type="entry name" value="acyl-acyl carrier protein thioesterase ATL3, chloroplastic"/>
    <property type="match status" value="1"/>
</dbReference>
<dbReference type="Gene3D" id="3.10.129.10">
    <property type="entry name" value="Hotdog Thioesterase"/>
    <property type="match status" value="1"/>
</dbReference>
<dbReference type="InterPro" id="IPR050563">
    <property type="entry name" value="4-hydroxybenzoyl-CoA_TE"/>
</dbReference>
<dbReference type="InterPro" id="IPR029069">
    <property type="entry name" value="HotDog_dom_sf"/>
</dbReference>
<dbReference type="PANTHER" id="PTHR31793">
    <property type="entry name" value="4-HYDROXYBENZOYL-COA THIOESTERASE FAMILY MEMBER"/>
    <property type="match status" value="1"/>
</dbReference>
<dbReference type="PANTHER" id="PTHR31793:SF27">
    <property type="entry name" value="NOVEL THIOESTERASE SUPERFAMILY DOMAIN AND SAPOSIN A-TYPE DOMAIN CONTAINING PROTEIN (0610012H03RIK)"/>
    <property type="match status" value="1"/>
</dbReference>
<dbReference type="Pfam" id="PF13279">
    <property type="entry name" value="4HBT_2"/>
    <property type="match status" value="1"/>
</dbReference>
<dbReference type="SUPFAM" id="SSF54637">
    <property type="entry name" value="Thioesterase/thiol ester dehydrase-isomerase"/>
    <property type="match status" value="1"/>
</dbReference>
<reference key="1">
    <citation type="journal article" date="2000" name="Nature">
        <title>Sequence and analysis of chromosome 1 of the plant Arabidopsis thaliana.</title>
        <authorList>
            <person name="Theologis A."/>
            <person name="Ecker J.R."/>
            <person name="Palm C.J."/>
            <person name="Federspiel N.A."/>
            <person name="Kaul S."/>
            <person name="White O."/>
            <person name="Alonso J."/>
            <person name="Altafi H."/>
            <person name="Araujo R."/>
            <person name="Bowman C.L."/>
            <person name="Brooks S.Y."/>
            <person name="Buehler E."/>
            <person name="Chan A."/>
            <person name="Chao Q."/>
            <person name="Chen H."/>
            <person name="Cheuk R.F."/>
            <person name="Chin C.W."/>
            <person name="Chung M.K."/>
            <person name="Conn L."/>
            <person name="Conway A.B."/>
            <person name="Conway A.R."/>
            <person name="Creasy T.H."/>
            <person name="Dewar K."/>
            <person name="Dunn P."/>
            <person name="Etgu P."/>
            <person name="Feldblyum T.V."/>
            <person name="Feng J.-D."/>
            <person name="Fong B."/>
            <person name="Fujii C.Y."/>
            <person name="Gill J.E."/>
            <person name="Goldsmith A.D."/>
            <person name="Haas B."/>
            <person name="Hansen N.F."/>
            <person name="Hughes B."/>
            <person name="Huizar L."/>
            <person name="Hunter J.L."/>
            <person name="Jenkins J."/>
            <person name="Johnson-Hopson C."/>
            <person name="Khan S."/>
            <person name="Khaykin E."/>
            <person name="Kim C.J."/>
            <person name="Koo H.L."/>
            <person name="Kremenetskaia I."/>
            <person name="Kurtz D.B."/>
            <person name="Kwan A."/>
            <person name="Lam B."/>
            <person name="Langin-Hooper S."/>
            <person name="Lee A."/>
            <person name="Lee J.M."/>
            <person name="Lenz C.A."/>
            <person name="Li J.H."/>
            <person name="Li Y.-P."/>
            <person name="Lin X."/>
            <person name="Liu S.X."/>
            <person name="Liu Z.A."/>
            <person name="Luros J.S."/>
            <person name="Maiti R."/>
            <person name="Marziali A."/>
            <person name="Militscher J."/>
            <person name="Miranda M."/>
            <person name="Nguyen M."/>
            <person name="Nierman W.C."/>
            <person name="Osborne B.I."/>
            <person name="Pai G."/>
            <person name="Peterson J."/>
            <person name="Pham P.K."/>
            <person name="Rizzo M."/>
            <person name="Rooney T."/>
            <person name="Rowley D."/>
            <person name="Sakano H."/>
            <person name="Salzberg S.L."/>
            <person name="Schwartz J.R."/>
            <person name="Shinn P."/>
            <person name="Southwick A.M."/>
            <person name="Sun H."/>
            <person name="Tallon L.J."/>
            <person name="Tambunga G."/>
            <person name="Toriumi M.J."/>
            <person name="Town C.D."/>
            <person name="Utterback T."/>
            <person name="Van Aken S."/>
            <person name="Vaysberg M."/>
            <person name="Vysotskaia V.S."/>
            <person name="Walker M."/>
            <person name="Wu D."/>
            <person name="Yu G."/>
            <person name="Fraser C.M."/>
            <person name="Venter J.C."/>
            <person name="Davis R.W."/>
        </authorList>
    </citation>
    <scope>NUCLEOTIDE SEQUENCE [LARGE SCALE GENOMIC DNA]</scope>
    <source>
        <strain>cv. Columbia</strain>
    </source>
</reference>
<reference key="2">
    <citation type="journal article" date="2017" name="Plant J.">
        <title>Araport11: a complete reannotation of the Arabidopsis thaliana reference genome.</title>
        <authorList>
            <person name="Cheng C.Y."/>
            <person name="Krishnakumar V."/>
            <person name="Chan A.P."/>
            <person name="Thibaud-Nissen F."/>
            <person name="Schobel S."/>
            <person name="Town C.D."/>
        </authorList>
    </citation>
    <scope>GENOME REANNOTATION</scope>
    <source>
        <strain>cv. Columbia</strain>
    </source>
</reference>
<reference key="3">
    <citation type="journal article" date="2003" name="Science">
        <title>Empirical analysis of transcriptional activity in the Arabidopsis genome.</title>
        <authorList>
            <person name="Yamada K."/>
            <person name="Lim J."/>
            <person name="Dale J.M."/>
            <person name="Chen H."/>
            <person name="Shinn P."/>
            <person name="Palm C.J."/>
            <person name="Southwick A.M."/>
            <person name="Wu H.C."/>
            <person name="Kim C.J."/>
            <person name="Nguyen M."/>
            <person name="Pham P.K."/>
            <person name="Cheuk R.F."/>
            <person name="Karlin-Newmann G."/>
            <person name="Liu S.X."/>
            <person name="Lam B."/>
            <person name="Sakano H."/>
            <person name="Wu T."/>
            <person name="Yu G."/>
            <person name="Miranda M."/>
            <person name="Quach H.L."/>
            <person name="Tripp M."/>
            <person name="Chang C.H."/>
            <person name="Lee J.M."/>
            <person name="Toriumi M.J."/>
            <person name="Chan M.M."/>
            <person name="Tang C.C."/>
            <person name="Onodera C.S."/>
            <person name="Deng J.M."/>
            <person name="Akiyama K."/>
            <person name="Ansari Y."/>
            <person name="Arakawa T."/>
            <person name="Banh J."/>
            <person name="Banno F."/>
            <person name="Bowser L."/>
            <person name="Brooks S.Y."/>
            <person name="Carninci P."/>
            <person name="Chao Q."/>
            <person name="Choy N."/>
            <person name="Enju A."/>
            <person name="Goldsmith A.D."/>
            <person name="Gurjal M."/>
            <person name="Hansen N.F."/>
            <person name="Hayashizaki Y."/>
            <person name="Johnson-Hopson C."/>
            <person name="Hsuan V.W."/>
            <person name="Iida K."/>
            <person name="Karnes M."/>
            <person name="Khan S."/>
            <person name="Koesema E."/>
            <person name="Ishida J."/>
            <person name="Jiang P.X."/>
            <person name="Jones T."/>
            <person name="Kawai J."/>
            <person name="Kamiya A."/>
            <person name="Meyers C."/>
            <person name="Nakajima M."/>
            <person name="Narusaka M."/>
            <person name="Seki M."/>
            <person name="Sakurai T."/>
            <person name="Satou M."/>
            <person name="Tamse R."/>
            <person name="Vaysberg M."/>
            <person name="Wallender E.K."/>
            <person name="Wong C."/>
            <person name="Yamamura Y."/>
            <person name="Yuan S."/>
            <person name="Shinozaki K."/>
            <person name="Davis R.W."/>
            <person name="Theologis A."/>
            <person name="Ecker J.R."/>
        </authorList>
    </citation>
    <scope>NUCLEOTIDE SEQUENCE [LARGE SCALE MRNA]</scope>
    <source>
        <strain>cv. Columbia</strain>
    </source>
</reference>
<reference key="4">
    <citation type="submission" date="2002-03" db="EMBL/GenBank/DDBJ databases">
        <title>Full-length cDNA from Arabidopsis thaliana.</title>
        <authorList>
            <person name="Brover V.V."/>
            <person name="Troukhan M.E."/>
            <person name="Alexandrov N.A."/>
            <person name="Lu Y.-P."/>
            <person name="Flavell R.B."/>
            <person name="Feldmann K.A."/>
        </authorList>
    </citation>
    <scope>NUCLEOTIDE SEQUENCE [LARGE SCALE MRNA]</scope>
</reference>
<reference key="5">
    <citation type="journal article" date="2014" name="Plant Mol. Biol.">
        <title>Acyl-lipid thioesterase1-4 from Arabidopsis thaliana form a novel family of fatty acyl-acyl carrier protein thioesterases with divergent expression patterns and substrate specificities.</title>
        <authorList>
            <person name="Pulsifer I.P."/>
            <person name="Lowe C."/>
            <person name="Narayaran S.A."/>
            <person name="Busuttil A.S."/>
            <person name="Vishwanath S.J."/>
            <person name="Domergue F."/>
            <person name="Rowland O."/>
        </authorList>
    </citation>
    <scope>FUNCTION</scope>
    <scope>SUBCELLULAR LOCATION</scope>
    <scope>TISSUE SPECIFICITY</scope>
</reference>
<proteinExistence type="evidence at transcript level"/>
<comment type="function">
    <text evidence="4">Acyl-ACP thioesterase involved in the production of fatty acids and beta-keto fatty acids. Can produce fatty acids of long chain (14:1 and 16:1) and beta-keto fatty acids of medium to long chain (8:0, 10:0, 12:0, 12:1, 14:0 and 16:0) when expressed in a heterologous organism (E.coli). Possesses thioesterase activity for lauroyl-ACP (12:0-ACP) in vitro. May play a role in the generation of long fatty acids in the chloroplast.</text>
</comment>
<comment type="subcellular location">
    <subcellularLocation>
        <location evidence="4">Plastid</location>
        <location evidence="4">Chloroplast</location>
    </subcellularLocation>
</comment>
<comment type="tissue specificity">
    <text evidence="4">Highly expressed in stems and flowers and at lower levels in rosette leaves, cauline leaves and siliques.</text>
</comment>
<comment type="similarity">
    <text evidence="6">Belongs to the 4-hydroxybenzoyl-CoA thioesterase family.</text>
</comment>
<comment type="sequence caution" evidence="6">
    <conflict type="erroneous initiation">
        <sequence resource="EMBL-CDS" id="AAG52599"/>
    </conflict>
    <text>Truncated N-terminus.</text>
</comment>
<accession>Q8W583</accession>
<accession>Q9C9G1</accession>